<evidence type="ECO:0000255" key="1">
    <source>
        <dbReference type="HAMAP-Rule" id="MF_01364"/>
    </source>
</evidence>
<evidence type="ECO:0000305" key="2"/>
<keyword id="KW-0479">Metal-binding</keyword>
<keyword id="KW-0687">Ribonucleoprotein</keyword>
<keyword id="KW-0689">Ribosomal protein</keyword>
<keyword id="KW-0694">RNA-binding</keyword>
<keyword id="KW-0699">rRNA-binding</keyword>
<keyword id="KW-0862">Zinc</keyword>
<comment type="function">
    <text evidence="1">Binds 16S rRNA, required for the assembly of 30S particles and may also be responsible for determining the conformation of the 16S rRNA at the A site.</text>
</comment>
<comment type="cofactor">
    <cofactor evidence="1">
        <name>Zn(2+)</name>
        <dbReference type="ChEBI" id="CHEBI:29105"/>
    </cofactor>
    <text evidence="1">Binds 1 zinc ion per subunit.</text>
</comment>
<comment type="subunit">
    <text evidence="1">Part of the 30S ribosomal subunit. Contacts proteins S3 and S10.</text>
</comment>
<comment type="similarity">
    <text evidence="1">Belongs to the universal ribosomal protein uS14 family. Zinc-binding uS14 subfamily.</text>
</comment>
<name>RS14Z_ACIF5</name>
<accession>B5ELZ2</accession>
<protein>
    <recommendedName>
        <fullName evidence="1">Small ribosomal subunit protein uS14</fullName>
    </recommendedName>
    <alternativeName>
        <fullName evidence="2">30S ribosomal protein S14 type Z</fullName>
    </alternativeName>
</protein>
<feature type="chain" id="PRO_1000143877" description="Small ribosomal subunit protein uS14">
    <location>
        <begin position="1"/>
        <end position="61"/>
    </location>
</feature>
<feature type="binding site" evidence="1">
    <location>
        <position position="24"/>
    </location>
    <ligand>
        <name>Zn(2+)</name>
        <dbReference type="ChEBI" id="CHEBI:29105"/>
    </ligand>
</feature>
<feature type="binding site" evidence="1">
    <location>
        <position position="27"/>
    </location>
    <ligand>
        <name>Zn(2+)</name>
        <dbReference type="ChEBI" id="CHEBI:29105"/>
    </ligand>
</feature>
<feature type="binding site" evidence="1">
    <location>
        <position position="40"/>
    </location>
    <ligand>
        <name>Zn(2+)</name>
        <dbReference type="ChEBI" id="CHEBI:29105"/>
    </ligand>
</feature>
<feature type="binding site" evidence="1">
    <location>
        <position position="43"/>
    </location>
    <ligand>
        <name>Zn(2+)</name>
        <dbReference type="ChEBI" id="CHEBI:29105"/>
    </ligand>
</feature>
<organism>
    <name type="scientific">Acidithiobacillus ferrooxidans (strain ATCC 53993 / BNL-5-31)</name>
    <name type="common">Leptospirillum ferrooxidans (ATCC 53993)</name>
    <dbReference type="NCBI Taxonomy" id="380394"/>
    <lineage>
        <taxon>Bacteria</taxon>
        <taxon>Pseudomonadati</taxon>
        <taxon>Pseudomonadota</taxon>
        <taxon>Acidithiobacillia</taxon>
        <taxon>Acidithiobacillales</taxon>
        <taxon>Acidithiobacillaceae</taxon>
        <taxon>Acidithiobacillus</taxon>
    </lineage>
</organism>
<reference key="1">
    <citation type="submission" date="2008-08" db="EMBL/GenBank/DDBJ databases">
        <title>Complete sequence of Acidithiobacillus ferrooxidans ATCC 53993.</title>
        <authorList>
            <person name="Lucas S."/>
            <person name="Copeland A."/>
            <person name="Lapidus A."/>
            <person name="Glavina del Rio T."/>
            <person name="Dalin E."/>
            <person name="Tice H."/>
            <person name="Bruce D."/>
            <person name="Goodwin L."/>
            <person name="Pitluck S."/>
            <person name="Sims D."/>
            <person name="Brettin T."/>
            <person name="Detter J.C."/>
            <person name="Han C."/>
            <person name="Kuske C.R."/>
            <person name="Larimer F."/>
            <person name="Land M."/>
            <person name="Hauser L."/>
            <person name="Kyrpides N."/>
            <person name="Lykidis A."/>
            <person name="Borole A.P."/>
        </authorList>
    </citation>
    <scope>NUCLEOTIDE SEQUENCE [LARGE SCALE GENOMIC DNA]</scope>
    <source>
        <strain>ATCC 53993 / BNL-5-31</strain>
    </source>
</reference>
<dbReference type="EMBL" id="CP001132">
    <property type="protein sequence ID" value="ACH82764.1"/>
    <property type="molecule type" value="Genomic_DNA"/>
</dbReference>
<dbReference type="RefSeq" id="WP_012536091.1">
    <property type="nucleotide sequence ID" value="NC_011206.1"/>
</dbReference>
<dbReference type="SMR" id="B5ELZ2"/>
<dbReference type="KEGG" id="afe:Lferr_0510"/>
<dbReference type="eggNOG" id="COG0199">
    <property type="taxonomic scope" value="Bacteria"/>
</dbReference>
<dbReference type="HOGENOM" id="CLU_139869_3_0_6"/>
<dbReference type="GO" id="GO:0005737">
    <property type="term" value="C:cytoplasm"/>
    <property type="evidence" value="ECO:0007669"/>
    <property type="project" value="UniProtKB-ARBA"/>
</dbReference>
<dbReference type="GO" id="GO:0015935">
    <property type="term" value="C:small ribosomal subunit"/>
    <property type="evidence" value="ECO:0007669"/>
    <property type="project" value="TreeGrafter"/>
</dbReference>
<dbReference type="GO" id="GO:0019843">
    <property type="term" value="F:rRNA binding"/>
    <property type="evidence" value="ECO:0007669"/>
    <property type="project" value="UniProtKB-UniRule"/>
</dbReference>
<dbReference type="GO" id="GO:0003735">
    <property type="term" value="F:structural constituent of ribosome"/>
    <property type="evidence" value="ECO:0007669"/>
    <property type="project" value="InterPro"/>
</dbReference>
<dbReference type="GO" id="GO:0008270">
    <property type="term" value="F:zinc ion binding"/>
    <property type="evidence" value="ECO:0007669"/>
    <property type="project" value="UniProtKB-UniRule"/>
</dbReference>
<dbReference type="GO" id="GO:0006412">
    <property type="term" value="P:translation"/>
    <property type="evidence" value="ECO:0007669"/>
    <property type="project" value="UniProtKB-UniRule"/>
</dbReference>
<dbReference type="FunFam" id="4.10.830.10:FF:000001">
    <property type="entry name" value="30S ribosomal protein S14 type Z"/>
    <property type="match status" value="1"/>
</dbReference>
<dbReference type="Gene3D" id="4.10.830.10">
    <property type="entry name" value="30s Ribosomal Protein S14, Chain N"/>
    <property type="match status" value="1"/>
</dbReference>
<dbReference type="HAMAP" id="MF_01364_B">
    <property type="entry name" value="Ribosomal_uS14_2_B"/>
    <property type="match status" value="1"/>
</dbReference>
<dbReference type="InterPro" id="IPR001209">
    <property type="entry name" value="Ribosomal_uS14"/>
</dbReference>
<dbReference type="InterPro" id="IPR023053">
    <property type="entry name" value="Ribosomal_uS14_bact"/>
</dbReference>
<dbReference type="InterPro" id="IPR018271">
    <property type="entry name" value="Ribosomal_uS14_CS"/>
</dbReference>
<dbReference type="InterPro" id="IPR043140">
    <property type="entry name" value="Ribosomal_uS14_sf"/>
</dbReference>
<dbReference type="NCBIfam" id="NF005974">
    <property type="entry name" value="PRK08061.1"/>
    <property type="match status" value="1"/>
</dbReference>
<dbReference type="PANTHER" id="PTHR19836">
    <property type="entry name" value="30S RIBOSOMAL PROTEIN S14"/>
    <property type="match status" value="1"/>
</dbReference>
<dbReference type="PANTHER" id="PTHR19836:SF19">
    <property type="entry name" value="SMALL RIBOSOMAL SUBUNIT PROTEIN US14M"/>
    <property type="match status" value="1"/>
</dbReference>
<dbReference type="Pfam" id="PF00253">
    <property type="entry name" value="Ribosomal_S14"/>
    <property type="match status" value="1"/>
</dbReference>
<dbReference type="SUPFAM" id="SSF57716">
    <property type="entry name" value="Glucocorticoid receptor-like (DNA-binding domain)"/>
    <property type="match status" value="1"/>
</dbReference>
<dbReference type="PROSITE" id="PS00527">
    <property type="entry name" value="RIBOSOMAL_S14"/>
    <property type="match status" value="1"/>
</dbReference>
<sequence>MAKKSLIAKSERTPKFKVRAYHRCKLCGRSRGYYRKFGLCRLCFRKHASAGSIPGIVKASW</sequence>
<gene>
    <name evidence="1" type="primary">rpsZ</name>
    <name evidence="1" type="synonym">rpsN</name>
    <name type="ordered locus">Lferr_0510</name>
</gene>
<proteinExistence type="inferred from homology"/>